<proteinExistence type="inferred from homology"/>
<gene>
    <name evidence="4" type="primary">wdr-4</name>
    <name evidence="4" type="ORF">Y102E9.2</name>
</gene>
<protein>
    <recommendedName>
        <fullName evidence="2">tRNA (guanine-N(7)-)-methyltransferase non-catalytic subunit</fullName>
    </recommendedName>
    <alternativeName>
        <fullName evidence="2">WD repeat-containing protein 4 homolog</fullName>
    </alternativeName>
</protein>
<keyword id="KW-0539">Nucleus</keyword>
<keyword id="KW-1185">Reference proteome</keyword>
<keyword id="KW-0677">Repeat</keyword>
<keyword id="KW-0819">tRNA processing</keyword>
<keyword id="KW-0853">WD repeat</keyword>
<name>WDR4_CAEEL</name>
<feature type="chain" id="PRO_0000370537" description="tRNA (guanine-N(7)-)-methyltransferase non-catalytic subunit">
    <location>
        <begin position="1"/>
        <end position="388"/>
    </location>
</feature>
<feature type="repeat" description="WD 1" evidence="1">
    <location>
        <begin position="58"/>
        <end position="102"/>
    </location>
</feature>
<feature type="repeat" description="WD 2" evidence="1">
    <location>
        <begin position="112"/>
        <end position="151"/>
    </location>
</feature>
<feature type="repeat" description="WD 3" evidence="1">
    <location>
        <begin position="153"/>
        <end position="194"/>
    </location>
</feature>
<feature type="repeat" description="WD 4" evidence="1">
    <location>
        <begin position="196"/>
        <end position="234"/>
    </location>
</feature>
<feature type="region of interest" description="Disordered" evidence="3">
    <location>
        <begin position="365"/>
        <end position="388"/>
    </location>
</feature>
<organism>
    <name type="scientific">Caenorhabditis elegans</name>
    <dbReference type="NCBI Taxonomy" id="6239"/>
    <lineage>
        <taxon>Eukaryota</taxon>
        <taxon>Metazoa</taxon>
        <taxon>Ecdysozoa</taxon>
        <taxon>Nematoda</taxon>
        <taxon>Chromadorea</taxon>
        <taxon>Rhabditida</taxon>
        <taxon>Rhabditina</taxon>
        <taxon>Rhabditomorpha</taxon>
        <taxon>Rhabditoidea</taxon>
        <taxon>Rhabditidae</taxon>
        <taxon>Peloderinae</taxon>
        <taxon>Caenorhabditis</taxon>
    </lineage>
</organism>
<comment type="function">
    <text evidence="2">Required for the formation of N(7)-methylguanine at position 46 (m7G46) in tRNA. In the complex, it is required to stabilize and induce conformational changes of the catalytic subunit.</text>
</comment>
<comment type="pathway">
    <text evidence="2">tRNA modification; N(7)-methylguanine-tRNA biosynthesis.</text>
</comment>
<comment type="subunit">
    <text evidence="2">Forms a heterodimer with the catalytic subunit.</text>
</comment>
<comment type="subcellular location">
    <subcellularLocation>
        <location evidence="2">Nucleus</location>
    </subcellularLocation>
</comment>
<comment type="similarity">
    <text evidence="2">Belongs to the WD repeat TRM82 family.</text>
</comment>
<accession>Q23232</accession>
<dbReference type="EMBL" id="FO081313">
    <property type="protein sequence ID" value="CCD70714.1"/>
    <property type="molecule type" value="Genomic_DNA"/>
</dbReference>
<dbReference type="PIR" id="T26372">
    <property type="entry name" value="T26372"/>
</dbReference>
<dbReference type="RefSeq" id="NP_498476.1">
    <property type="nucleotide sequence ID" value="NM_066075.5"/>
</dbReference>
<dbReference type="SMR" id="Q23232"/>
<dbReference type="BioGRID" id="55430">
    <property type="interactions" value="3"/>
</dbReference>
<dbReference type="DIP" id="DIP-26730N"/>
<dbReference type="FunCoup" id="Q23232">
    <property type="interactions" value="191"/>
</dbReference>
<dbReference type="IntAct" id="Q23232">
    <property type="interactions" value="1"/>
</dbReference>
<dbReference type="STRING" id="6239.Y102E9.2b.1"/>
<dbReference type="PaxDb" id="6239-Y102E9.2b"/>
<dbReference type="PeptideAtlas" id="Q23232"/>
<dbReference type="EnsemblMetazoa" id="Y102E9.2a.1">
    <property type="protein sequence ID" value="Y102E9.2a.1"/>
    <property type="gene ID" value="WBGene00022420"/>
</dbReference>
<dbReference type="GeneID" id="190860"/>
<dbReference type="KEGG" id="cel:CELE_Y102E9.2"/>
<dbReference type="UCSC" id="Y102E9.2b">
    <property type="organism name" value="c. elegans"/>
</dbReference>
<dbReference type="AGR" id="WB:WBGene00022420"/>
<dbReference type="CTD" id="190860"/>
<dbReference type="WormBase" id="Y102E9.2a">
    <property type="protein sequence ID" value="CE07574"/>
    <property type="gene ID" value="WBGene00022420"/>
    <property type="gene designation" value="wdr-4"/>
</dbReference>
<dbReference type="eggNOG" id="KOG3914">
    <property type="taxonomic scope" value="Eukaryota"/>
</dbReference>
<dbReference type="GeneTree" id="ENSGT00390000012174"/>
<dbReference type="InParanoid" id="Q23232"/>
<dbReference type="OrthoDB" id="371245at2759"/>
<dbReference type="UniPathway" id="UPA00989"/>
<dbReference type="PRO" id="PR:Q23232"/>
<dbReference type="Proteomes" id="UP000001940">
    <property type="component" value="Chromosome III"/>
</dbReference>
<dbReference type="Bgee" id="WBGene00022420">
    <property type="expression patterns" value="Expressed in germ line (C elegans) and 4 other cell types or tissues"/>
</dbReference>
<dbReference type="ExpressionAtlas" id="Q23232">
    <property type="expression patterns" value="baseline and differential"/>
</dbReference>
<dbReference type="GO" id="GO:0005829">
    <property type="term" value="C:cytosol"/>
    <property type="evidence" value="ECO:0000318"/>
    <property type="project" value="GO_Central"/>
</dbReference>
<dbReference type="GO" id="GO:0005634">
    <property type="term" value="C:nucleus"/>
    <property type="evidence" value="ECO:0000318"/>
    <property type="project" value="GO_Central"/>
</dbReference>
<dbReference type="GO" id="GO:0043527">
    <property type="term" value="C:tRNA methyltransferase complex"/>
    <property type="evidence" value="ECO:0000318"/>
    <property type="project" value="GO_Central"/>
</dbReference>
<dbReference type="GO" id="GO:0106004">
    <property type="term" value="P:tRNA (guanine-N7)-methylation"/>
    <property type="evidence" value="ECO:0007669"/>
    <property type="project" value="UniProtKB-UniRule"/>
</dbReference>
<dbReference type="GO" id="GO:0006400">
    <property type="term" value="P:tRNA modification"/>
    <property type="evidence" value="ECO:0000318"/>
    <property type="project" value="GO_Central"/>
</dbReference>
<dbReference type="FunFam" id="2.130.10.10:FF:002623">
    <property type="entry name" value="tRNA (guanine-N(7)-)-methyltransferase non-catalytic subunit"/>
    <property type="match status" value="1"/>
</dbReference>
<dbReference type="Gene3D" id="2.130.10.10">
    <property type="entry name" value="YVTN repeat-like/Quinoprotein amine dehydrogenase"/>
    <property type="match status" value="1"/>
</dbReference>
<dbReference type="HAMAP" id="MF_03056">
    <property type="entry name" value="TRM82"/>
    <property type="match status" value="1"/>
</dbReference>
<dbReference type="InterPro" id="IPR028884">
    <property type="entry name" value="Trm82"/>
</dbReference>
<dbReference type="InterPro" id="IPR015943">
    <property type="entry name" value="WD40/YVTN_repeat-like_dom_sf"/>
</dbReference>
<dbReference type="InterPro" id="IPR001680">
    <property type="entry name" value="WD40_rpt"/>
</dbReference>
<dbReference type="PANTHER" id="PTHR16288:SF0">
    <property type="entry name" value="TRNA (GUANINE-N(7)-)-METHYLTRANSFERASE NON-CATALYTIC SUBUNIT WDR4"/>
    <property type="match status" value="1"/>
</dbReference>
<dbReference type="PANTHER" id="PTHR16288">
    <property type="entry name" value="WD40 REPEAT PROTEIN 4"/>
    <property type="match status" value="1"/>
</dbReference>
<dbReference type="Pfam" id="PF00400">
    <property type="entry name" value="WD40"/>
    <property type="match status" value="1"/>
</dbReference>
<dbReference type="SUPFAM" id="SSF69322">
    <property type="entry name" value="Tricorn protease domain 2"/>
    <property type="match status" value="1"/>
</dbReference>
<dbReference type="PROSITE" id="PS50294">
    <property type="entry name" value="WD_REPEATS_REGION"/>
    <property type="match status" value="1"/>
</dbReference>
<evidence type="ECO:0000255" key="1"/>
<evidence type="ECO:0000255" key="2">
    <source>
        <dbReference type="HAMAP-Rule" id="MF_03056"/>
    </source>
</evidence>
<evidence type="ECO:0000256" key="3">
    <source>
        <dbReference type="SAM" id="MobiDB-lite"/>
    </source>
</evidence>
<evidence type="ECO:0000312" key="4">
    <source>
        <dbReference type="WormBase" id="Y102E9.2a"/>
    </source>
</evidence>
<reference key="1">
    <citation type="journal article" date="1998" name="Science">
        <title>Genome sequence of the nematode C. elegans: a platform for investigating biology.</title>
        <authorList>
            <consortium name="The C. elegans sequencing consortium"/>
        </authorList>
    </citation>
    <scope>NUCLEOTIDE SEQUENCE [LARGE SCALE GENOMIC DNA]</scope>
    <source>
        <strain>Bristol N2</strain>
    </source>
</reference>
<sequence>MSFITAFRERVFIASGDLIRTFRISEETELKNFISWSKINPERIQKPSFDIEKELKAVEKRVILCLAHSNVLTTHGRRLVAVGTNEKQIHVFEYFVNDKGDIVTAEHIVTSVVPKAPTAIVFDKEDAYVVVGDRAGDVHRFSVLNGSAIEMAGAISMILDVAFSPDGKRLLMADRDEKVRALRYPATSVIDSFFLGHTEYVKTLAVQDNDSLWSSGGDKNLYNWSIAKCSAPRRTLDLSQFDAPIRKISINLQHKKIAVIFEKIETVVIVDLNQESLQTTSVSIVGESQCLDIASTKDYFAVLGRSTVHLIDLNNMEQKFVPIDEELTITLTSTNDAIDNLFKNVTHNNQQEYEKRKADKFEQIEKKKRRLNEDINGDDGEGPGPSNS</sequence>